<comment type="function">
    <text evidence="3 4 8">Probably a component of the fimbrium tip; required for incorporation of FimC and FimD into fimbriae (PubMed:17526848, PubMed:19506009). These long, filamentous pili are attached to the cell surface; they mediate biofilm formation, adhesion onto host cells and onto other bacteria that are part of the oral microbiome (PubMed:17526848, PubMed:19506009). They play an important role in invasion of periodontal tissues and are major virulence factors (Probable). FimC, FimD and FimE contribute to interaction with host CXCR4 and thereby down-regulate the TLR2-mediated host immune response (PubMed:19506009).</text>
</comment>
<comment type="subunit">
    <text evidence="3">Fimbriae are composed of a major, structural subunit and the minor components FimC, FimD and FimE (PubMed:17526848, PubMed:19506009). Identified in a complex composed of FimC, FimD and FimE (in vitro) (PubMed:19506009). Does not directly interact with host proteins, but only as a complex with FimC and FimD (PubMed:19506009).</text>
</comment>
<comment type="subcellular location">
    <subcellularLocation>
        <location evidence="3">Fimbrium</location>
    </subcellularLocation>
    <subcellularLocation>
        <location evidence="8">Cell outer membrane</location>
    </subcellularLocation>
    <text evidence="8 9">Probably synthesized as a palmitoylated precursor. Efficient export to the outer membrane and integration into fimbriae requires lipidation and subsequent proteolytic removal of the lipidated propeptide (Probable). Probably part of the fimbrium tip, as a part of the complex formed by FimC, FimD and FimE (PubMed:17675496).</text>
</comment>
<comment type="disruption phenotype">
    <text evidence="4">Triple mutants lacking FimC, FimD and FimE show strongly decreased interaction with host CXCR4 and impaired down-regulation of the TLR2-mediated innate immune response, resulting in strongly reduced survival of the bacteria.</text>
</comment>
<comment type="miscellaneous">
    <text evidence="8">The name (major fimbrium subunit) does not indicate the abundance of the protein, but is derived from the greater length of the major fimbriae. In strain ATCC 33277 and strain ATCC BAA-1703 / FDC 381, major fimbriae are 300 - 1600 nM in length and about 5 nm in diameter. In contrast, minor fimbriae are only about 80 - 120 nm long. This length difference is observed only in a small number of strains, including strain ATCC 33277 and strain ATCC BAA-1703 / FDC 381, and is due to a loss of function mutation in FimB, a protein that restricts fimbrial length in other strains.</text>
</comment>
<comment type="similarity">
    <text evidence="8">Belongs to the FimE family.</text>
</comment>
<comment type="online information" name="Protein Spotlight">
    <link uri="https://www.proteinspotlight.org/back_issues/182/"/>
    <text>A loosening of habits - Issue 182 of August 2016</text>
</comment>
<proteinExistence type="evidence at protein level"/>
<evidence type="ECO:0000255" key="1"/>
<evidence type="ECO:0000255" key="2">
    <source>
        <dbReference type="PROSITE-ProRule" id="PRU00303"/>
    </source>
</evidence>
<evidence type="ECO:0000269" key="3">
    <source>
    </source>
</evidence>
<evidence type="ECO:0000269" key="4">
    <source>
    </source>
</evidence>
<evidence type="ECO:0000303" key="5">
    <source>
    </source>
</evidence>
<evidence type="ECO:0000303" key="6">
    <source>
    </source>
</evidence>
<evidence type="ECO:0000303" key="7">
    <source>
    </source>
</evidence>
<evidence type="ECO:0000305" key="8"/>
<evidence type="ECO:0000305" key="9">
    <source>
    </source>
</evidence>
<evidence type="ECO:0000312" key="10">
    <source>
        <dbReference type="EMBL" id="BAG32704.1"/>
    </source>
</evidence>
<evidence type="ECO:0000312" key="11">
    <source>
        <dbReference type="Proteomes" id="UP000008842"/>
    </source>
</evidence>
<keyword id="KW-0998">Cell outer membrane</keyword>
<keyword id="KW-0281">Fimbrium</keyword>
<keyword id="KW-0449">Lipoprotein</keyword>
<keyword id="KW-0472">Membrane</keyword>
<keyword id="KW-0564">Palmitate</keyword>
<keyword id="KW-0732">Signal</keyword>
<keyword id="KW-0843">Virulence</keyword>
<dbReference type="EMBL" id="AP009380">
    <property type="protein sequence ID" value="BAG32704.1"/>
    <property type="molecule type" value="Genomic_DNA"/>
</dbReference>
<dbReference type="RefSeq" id="WP_012457311.1">
    <property type="nucleotide sequence ID" value="NC_010729.1"/>
</dbReference>
<dbReference type="GeneID" id="29255430"/>
<dbReference type="KEGG" id="pgn:PGN_0185"/>
<dbReference type="eggNOG" id="ENOG5033WW5">
    <property type="taxonomic scope" value="Bacteria"/>
</dbReference>
<dbReference type="HOGENOM" id="CLU_495072_0_0_10"/>
<dbReference type="OrthoDB" id="1090227at2"/>
<dbReference type="BioCyc" id="PGIN431947:G1G2V-201-MONOMER"/>
<dbReference type="Proteomes" id="UP000008842">
    <property type="component" value="Chromosome"/>
</dbReference>
<dbReference type="GO" id="GO:0009279">
    <property type="term" value="C:cell outer membrane"/>
    <property type="evidence" value="ECO:0007669"/>
    <property type="project" value="UniProtKB-SubCell"/>
</dbReference>
<dbReference type="GO" id="GO:0009289">
    <property type="term" value="C:pilus"/>
    <property type="evidence" value="ECO:0000314"/>
    <property type="project" value="UniProtKB"/>
</dbReference>
<dbReference type="GO" id="GO:0046810">
    <property type="term" value="F:host cell extracellular matrix binding"/>
    <property type="evidence" value="ECO:0000314"/>
    <property type="project" value="UniProtKB"/>
</dbReference>
<dbReference type="GO" id="GO:0098609">
    <property type="term" value="P:cell-cell adhesion"/>
    <property type="evidence" value="ECO:0000315"/>
    <property type="project" value="UniProtKB"/>
</dbReference>
<dbReference type="PROSITE" id="PS51257">
    <property type="entry name" value="PROKAR_LIPOPROTEIN"/>
    <property type="match status" value="1"/>
</dbReference>
<feature type="signal peptide" evidence="2">
    <location>
        <begin position="1"/>
        <end position="21"/>
    </location>
</feature>
<feature type="propeptide" id="PRO_0000436743" evidence="1">
    <location>
        <begin position="22"/>
        <end position="51"/>
    </location>
</feature>
<feature type="chain" id="PRO_5002780248" description="Major fimbrium tip subunit FimE" evidence="2">
    <location>
        <begin position="52"/>
        <end position="550"/>
    </location>
</feature>
<feature type="lipid moiety-binding region" description="N-palmitoyl cysteine" evidence="2">
    <location>
        <position position="22"/>
    </location>
</feature>
<feature type="lipid moiety-binding region" description="S-diacylglycerol cysteine" evidence="2">
    <location>
        <position position="22"/>
    </location>
</feature>
<accession>B2RH59</accession>
<sequence>MKSKSIIAQLLYVLIAFMAVSCVADKSEPCPSGEPTRVSGSIVSLEHHGLRGASADKENSVERLELWVFDEDGHFLERAVADLSGSTFTAKIIPSEVERRIHFIANYELADPSVWVGRSEREMLPSISVADDLETIRMWARISYPSIAPNQNLGQIQLLRNMAKFSLSVTPPAESKLYDASYALYNSWNKGTLAPFDPNTGSFPQGQITEPAGVVFANPTSEAAFKEADGAHFFYGFERDQSNIGTGAGITCLILKARYNLPNADYTYYKLDFVDTNKVRYNITRNHFYKMILKKAKAPGRPTLQEALDGAAANNIFLSAEVQALPAFSDGSGMLTVDHTYMVFVQGEPSGTFQATYIPQGQNNPDYSKLTVSVSTPTGQQAAVTSAQHEGNGKIKLTLAQQENLTKRSDVVIGVQGNPDLKRSVTVLVREKYQYVFFKANTSSAENNQVTTQISAGQGNELLISAKLPDVLNAALLPITFKVYTEHFYPKTGGMILGIEGGKTLYKYVLTTMPQNKELQFRFKSNKVNSAENIAVKMDYFHDQTIHVTN</sequence>
<organism>
    <name type="scientific">Porphyromonas gingivalis (strain ATCC 33277 / DSM 20709 / CIP 103683 / JCM 12257 / NCTC 11834 / 2561)</name>
    <dbReference type="NCBI Taxonomy" id="431947"/>
    <lineage>
        <taxon>Bacteria</taxon>
        <taxon>Pseudomonadati</taxon>
        <taxon>Bacteroidota</taxon>
        <taxon>Bacteroidia</taxon>
        <taxon>Bacteroidales</taxon>
        <taxon>Porphyromonadaceae</taxon>
        <taxon>Porphyromonas</taxon>
    </lineage>
</organism>
<reference evidence="10 11" key="1">
    <citation type="journal article" date="2008" name="DNA Res.">
        <title>Determination of the genome sequence of Porphyromonas gingivalis strain ATCC 33277 and genomic comparison with strain W83 revealed extensive genome rearrangements in P. gingivalis.</title>
        <authorList>
            <person name="Naito M."/>
            <person name="Hirakawa H."/>
            <person name="Yamashita A."/>
            <person name="Ohara N."/>
            <person name="Shoji M."/>
            <person name="Yukitake H."/>
            <person name="Nakayama K."/>
            <person name="Toh H."/>
            <person name="Yoshimura F."/>
            <person name="Kuhara S."/>
            <person name="Hattori M."/>
            <person name="Hayashi T."/>
            <person name="Nakayama K."/>
        </authorList>
    </citation>
    <scope>NUCLEOTIDE SEQUENCE [LARGE SCALE GENOMIC DNA]</scope>
    <source>
        <strain evidence="11">ATCC 33277 / DSM 20709 / CIP 103683 / JCM 12257 / NCTC 11834 / 2561</strain>
    </source>
</reference>
<reference key="2">
    <citation type="journal article" date="2007" name="J. Immunol.">
        <title>Fimbrial proteins of porphyromonas gingivalis mediate in vivo virulence and exploit TLR2 and complement receptor 3 to persist in macrophages.</title>
        <authorList>
            <person name="Wang M."/>
            <person name="Shakhatreh M.A."/>
            <person name="James D."/>
            <person name="Liang S."/>
            <person name="Nishiyama S."/>
            <person name="Yoshimura F."/>
            <person name="Demuth D.R."/>
            <person name="Hajishengallis G."/>
        </authorList>
    </citation>
    <scope>FUNCTION</scope>
    <scope>SUBCELLULAR LOCATION</scope>
    <scope>SUBUNIT</scope>
    <source>
        <strain evidence="6">ATCC 33277 / DSM 20709 / CIP 103683 / JCM 12257 / NCTC 11834 / 2561</strain>
    </source>
</reference>
<reference key="3">
    <citation type="journal article" date="2007" name="Microbiology">
        <title>Involvement of minor components associated with the FimA fimbriae of Porphyromonas gingivalis in adhesive functions.</title>
        <authorList>
            <person name="Nishiyama S."/>
            <person name="Murakami Y."/>
            <person name="Nagata H."/>
            <person name="Shizukuishi S."/>
            <person name="Kawagishi I."/>
            <person name="Yoshimura F."/>
        </authorList>
    </citation>
    <scope>FUNCTION</scope>
    <scope>SUBCELLULAR LOCATION</scope>
    <scope>SUBUNIT</scope>
    <source>
        <strain evidence="5">ATCC 33277 / DSM 20709 / CIP 103683 / JCM 12257 / NCTC 11834 / 2561</strain>
    </source>
</reference>
<reference key="4">
    <citation type="journal article" date="2009" name="Infect. Immun.">
        <title>Host adhesive activities and virulence of novel fimbrial proteins of Porphyromonas gingivalis.</title>
        <authorList>
            <person name="Pierce D.L."/>
            <person name="Nishiyama S."/>
            <person name="Liang S."/>
            <person name="Wang M."/>
            <person name="Triantafilou M."/>
            <person name="Triantafilou K."/>
            <person name="Yoshimura F."/>
            <person name="Demuth D.R."/>
            <person name="Hajishengallis G."/>
        </authorList>
    </citation>
    <scope>FUNCTION</scope>
    <scope>DISRUPTION PHENOTYPE</scope>
    <scope>IDENTIFICATION IN A COMPLEX CONTAINING FIMC; FIMD AND FIME</scope>
    <scope>INTERACTION WITH HOST CXCR4</scope>
    <scope>SUBUNIT</scope>
    <scope>SUBCELLULAR LOCATION</scope>
    <source>
        <strain evidence="7">ATCC 33277 / DSM 20709 / CIP 103683 / JCM 12257 / NCTC 11834 / 2561</strain>
    </source>
</reference>
<name>FIME_PORG3</name>
<protein>
    <recommendedName>
        <fullName>Major fimbrium tip subunit FimE</fullName>
    </recommendedName>
</protein>
<gene>
    <name evidence="10" type="primary">fimE</name>
    <name evidence="10" type="ordered locus">PGN_0185</name>
</gene>